<protein>
    <recommendedName>
        <fullName evidence="1">Membrane-bound lytic murein transglycosylase F</fullName>
        <ecNumber evidence="1">4.2.2.n1</ecNumber>
    </recommendedName>
    <alternativeName>
        <fullName evidence="1">Murein lyase F</fullName>
    </alternativeName>
</protein>
<dbReference type="EC" id="4.2.2.n1" evidence="1"/>
<dbReference type="EMBL" id="CP000304">
    <property type="protein sequence ID" value="ABP80715.1"/>
    <property type="status" value="ALT_INIT"/>
    <property type="molecule type" value="Genomic_DNA"/>
</dbReference>
<dbReference type="RefSeq" id="WP_017246462.1">
    <property type="nucleotide sequence ID" value="NC_009434.1"/>
</dbReference>
<dbReference type="SMR" id="A4VP14"/>
<dbReference type="CAZy" id="GH23">
    <property type="family name" value="Glycoside Hydrolase Family 23"/>
</dbReference>
<dbReference type="GeneID" id="66822461"/>
<dbReference type="KEGG" id="psa:PST_3075"/>
<dbReference type="eggNOG" id="COG4623">
    <property type="taxonomic scope" value="Bacteria"/>
</dbReference>
<dbReference type="HOGENOM" id="CLU_027494_0_1_6"/>
<dbReference type="Proteomes" id="UP000000233">
    <property type="component" value="Chromosome"/>
</dbReference>
<dbReference type="GO" id="GO:0009279">
    <property type="term" value="C:cell outer membrane"/>
    <property type="evidence" value="ECO:0007669"/>
    <property type="project" value="UniProtKB-SubCell"/>
</dbReference>
<dbReference type="GO" id="GO:0008933">
    <property type="term" value="F:peptidoglycan lytic transglycosylase activity"/>
    <property type="evidence" value="ECO:0007669"/>
    <property type="project" value="UniProtKB-UniRule"/>
</dbReference>
<dbReference type="GO" id="GO:0016998">
    <property type="term" value="P:cell wall macromolecule catabolic process"/>
    <property type="evidence" value="ECO:0007669"/>
    <property type="project" value="UniProtKB-UniRule"/>
</dbReference>
<dbReference type="GO" id="GO:0071555">
    <property type="term" value="P:cell wall organization"/>
    <property type="evidence" value="ECO:0007669"/>
    <property type="project" value="UniProtKB-KW"/>
</dbReference>
<dbReference type="GO" id="GO:0009253">
    <property type="term" value="P:peptidoglycan catabolic process"/>
    <property type="evidence" value="ECO:0007669"/>
    <property type="project" value="TreeGrafter"/>
</dbReference>
<dbReference type="CDD" id="cd13403">
    <property type="entry name" value="MLTF-like"/>
    <property type="match status" value="1"/>
</dbReference>
<dbReference type="CDD" id="cd01009">
    <property type="entry name" value="PBP2_YfhD_N"/>
    <property type="match status" value="1"/>
</dbReference>
<dbReference type="Gene3D" id="1.10.530.10">
    <property type="match status" value="1"/>
</dbReference>
<dbReference type="Gene3D" id="3.40.190.10">
    <property type="entry name" value="Periplasmic binding protein-like II"/>
    <property type="match status" value="2"/>
</dbReference>
<dbReference type="HAMAP" id="MF_02016">
    <property type="entry name" value="MltF"/>
    <property type="match status" value="1"/>
</dbReference>
<dbReference type="InterPro" id="IPR023346">
    <property type="entry name" value="Lysozyme-like_dom_sf"/>
</dbReference>
<dbReference type="InterPro" id="IPR023703">
    <property type="entry name" value="MltF"/>
</dbReference>
<dbReference type="InterPro" id="IPR001638">
    <property type="entry name" value="Solute-binding_3/MltF_N"/>
</dbReference>
<dbReference type="InterPro" id="IPR000189">
    <property type="entry name" value="Transglyc_AS"/>
</dbReference>
<dbReference type="InterPro" id="IPR008258">
    <property type="entry name" value="Transglycosylase_SLT_dom_1"/>
</dbReference>
<dbReference type="NCBIfam" id="NF008112">
    <property type="entry name" value="PRK10859.1"/>
    <property type="match status" value="1"/>
</dbReference>
<dbReference type="PANTHER" id="PTHR35936">
    <property type="entry name" value="MEMBRANE-BOUND LYTIC MUREIN TRANSGLYCOSYLASE F"/>
    <property type="match status" value="1"/>
</dbReference>
<dbReference type="PANTHER" id="PTHR35936:SF32">
    <property type="entry name" value="MEMBRANE-BOUND LYTIC MUREIN TRANSGLYCOSYLASE F"/>
    <property type="match status" value="1"/>
</dbReference>
<dbReference type="Pfam" id="PF00497">
    <property type="entry name" value="SBP_bac_3"/>
    <property type="match status" value="1"/>
</dbReference>
<dbReference type="Pfam" id="PF01464">
    <property type="entry name" value="SLT"/>
    <property type="match status" value="1"/>
</dbReference>
<dbReference type="SMART" id="SM00062">
    <property type="entry name" value="PBPb"/>
    <property type="match status" value="1"/>
</dbReference>
<dbReference type="SUPFAM" id="SSF53955">
    <property type="entry name" value="Lysozyme-like"/>
    <property type="match status" value="1"/>
</dbReference>
<dbReference type="SUPFAM" id="SSF53850">
    <property type="entry name" value="Periplasmic binding protein-like II"/>
    <property type="match status" value="1"/>
</dbReference>
<dbReference type="PROSITE" id="PS00922">
    <property type="entry name" value="TRANSGLYCOSYLASE"/>
    <property type="match status" value="1"/>
</dbReference>
<name>MLTF_STUS1</name>
<keyword id="KW-0998">Cell outer membrane</keyword>
<keyword id="KW-0961">Cell wall biogenesis/degradation</keyword>
<keyword id="KW-0456">Lyase</keyword>
<keyword id="KW-0472">Membrane</keyword>
<keyword id="KW-1185">Reference proteome</keyword>
<keyword id="KW-0732">Signal</keyword>
<feature type="signal peptide" evidence="1">
    <location>
        <begin position="1"/>
        <end position="28"/>
    </location>
</feature>
<feature type="chain" id="PRO_0000353968" description="Membrane-bound lytic murein transglycosylase F">
    <location>
        <begin position="29"/>
        <end position="486"/>
    </location>
</feature>
<feature type="region of interest" description="Non-LT domain" evidence="1">
    <location>
        <begin position="29"/>
        <end position="267"/>
    </location>
</feature>
<feature type="region of interest" description="LT domain" evidence="1">
    <location>
        <begin position="268"/>
        <end position="486"/>
    </location>
</feature>
<feature type="active site" evidence="1">
    <location>
        <position position="314"/>
    </location>
</feature>
<proteinExistence type="inferred from homology"/>
<evidence type="ECO:0000255" key="1">
    <source>
        <dbReference type="HAMAP-Rule" id="MF_02016"/>
    </source>
</evidence>
<evidence type="ECO:0000305" key="2"/>
<reference key="1">
    <citation type="journal article" date="2008" name="Proc. Natl. Acad. Sci. U.S.A.">
        <title>Nitrogen fixation island and rhizosphere competence traits in the genome of root-associated Pseudomonas stutzeri A1501.</title>
        <authorList>
            <person name="Yan Y."/>
            <person name="Yang J."/>
            <person name="Dou Y."/>
            <person name="Chen M."/>
            <person name="Ping S."/>
            <person name="Peng J."/>
            <person name="Lu W."/>
            <person name="Zhang W."/>
            <person name="Yao Z."/>
            <person name="Li H."/>
            <person name="Liu W."/>
            <person name="He S."/>
            <person name="Geng L."/>
            <person name="Zhang X."/>
            <person name="Yang F."/>
            <person name="Yu H."/>
            <person name="Zhan Y."/>
            <person name="Li D."/>
            <person name="Lin Z."/>
            <person name="Wang Y."/>
            <person name="Elmerich C."/>
            <person name="Lin M."/>
            <person name="Jin Q."/>
        </authorList>
    </citation>
    <scope>NUCLEOTIDE SEQUENCE [LARGE SCALE GENOMIC DNA]</scope>
    <source>
        <strain>A1501</strain>
    </source>
</reference>
<accession>A4VP14</accession>
<organism>
    <name type="scientific">Stutzerimonas stutzeri (strain A1501)</name>
    <name type="common">Pseudomonas stutzeri</name>
    <dbReference type="NCBI Taxonomy" id="379731"/>
    <lineage>
        <taxon>Bacteria</taxon>
        <taxon>Pseudomonadati</taxon>
        <taxon>Pseudomonadota</taxon>
        <taxon>Gammaproteobacteria</taxon>
        <taxon>Pseudomonadales</taxon>
        <taxon>Pseudomonadaceae</taxon>
        <taxon>Stutzerimonas</taxon>
    </lineage>
</organism>
<sequence length="486" mass="54775">MFAHTLFRKRCAIWLLAIGIFLMLGSCAEKPSELERIKEEGVLRVITRNSPSTYFQDRNGEAGFEYELVKRFASTLGVELQIETADNIDDIFSRLNRPGGPALAAAGLVASEGRQELARFTRSYLDVTTQVVYHSGQRRPTSPKDLIGKRILVLKGSSQAEKLASLQVEYPELRYDESDAVEVVDLLRMVDEGQIDLTLVESNEMSMNQVYFSNIRAGFDVGEQNSLAWVVAKGEDDSLLKAADAFLEQAQQNGTLQRLRERYYGHVDVLGYVGAYAFAKHLQQRLPRYEKAFRETAKEHGIDWRLLAAIGYQESHWQPEATSKTGVRGLMMLTLRTANAMGVTNRLDPVQSIQGGGKYLVQVHASLPESIEEPDRTWFALAAYNVGGGHLEDARKLAEAEGLDPNKWLDVKQMLPRLSQKQWYSKTRYGYARGGEPVHFVANIRRYYDILTWVTQPQMEGQQLAKSELHIPGINSTDLMEELPPL</sequence>
<gene>
    <name evidence="1" type="primary">mltF</name>
    <name type="ordered locus">PST_3075</name>
</gene>
<comment type="function">
    <text evidence="1">Murein-degrading enzyme that degrades murein glycan strands and insoluble, high-molecular weight murein sacculi, with the concomitant formation of a 1,6-anhydromuramoyl product. Lytic transglycosylases (LTs) play an integral role in the metabolism of the peptidoglycan (PG) sacculus. Their lytic action creates space within the PG sacculus to allow for its expansion as well as for the insertion of various structures such as secretion systems and flagella.</text>
</comment>
<comment type="catalytic activity">
    <reaction evidence="1">
        <text>Exolytic cleavage of the (1-&gt;4)-beta-glycosidic linkage between N-acetylmuramic acid (MurNAc) and N-acetylglucosamine (GlcNAc) residues in peptidoglycan, from either the reducing or the non-reducing ends of the peptidoglycan chains, with concomitant formation of a 1,6-anhydrobond in the MurNAc residue.</text>
        <dbReference type="EC" id="4.2.2.n1"/>
    </reaction>
</comment>
<comment type="subcellular location">
    <subcellularLocation>
        <location>Cell outer membrane</location>
        <topology>Peripheral membrane protein</topology>
    </subcellularLocation>
    <text evidence="1">Attached to the inner leaflet of the outer membrane.</text>
</comment>
<comment type="domain">
    <text evidence="1">The N-terminal domain does not have lytic activity and probably modulates enzymatic activity. The C-terminal domain is the catalytic active domain.</text>
</comment>
<comment type="similarity">
    <text evidence="1">In the N-terminal section; belongs to the bacterial solute-binding protein 3 family.</text>
</comment>
<comment type="similarity">
    <text evidence="1">In the C-terminal section; belongs to the transglycosylase Slt family.</text>
</comment>
<comment type="sequence caution" evidence="2">
    <conflict type="erroneous initiation">
        <sequence resource="EMBL-CDS" id="ABP80715"/>
    </conflict>
</comment>